<sequence>MYTALQKIHKDKDAEPTEFEENVAQALFDFENTNQEIKSDLKDLYINSALQIDVSGGKKAVVIHVPYRLRKSFRKIHPRLVRELEKKFSGKEVVLIATRRILRPPKKGSAVQRPRSRTLTAVHDAMLEDIVYPAEIVGKRVRYRLDGSKIMKVFLDPKAKNDTENKLETFAGVYRKLSGKDVVFEFPLTE</sequence>
<proteinExistence type="evidence at transcript level"/>
<keyword id="KW-0687">Ribonucleoprotein</keyword>
<keyword id="KW-0689">Ribosomal protein</keyword>
<gene>
    <name type="primary">RPS7</name>
</gene>
<protein>
    <recommendedName>
        <fullName evidence="1">Small ribosomal subunit protein eS7</fullName>
    </recommendedName>
    <alternativeName>
        <fullName>40S ribosomal protein S7</fullName>
    </alternativeName>
</protein>
<feature type="chain" id="PRO_0000174205" description="Small ribosomal subunit protein eS7">
    <location>
        <begin position="1"/>
        <end position="190"/>
    </location>
</feature>
<accession>Q9ZNS1</accession>
<comment type="similarity">
    <text evidence="1">Belongs to the eukaryotic ribosomal protein eS7 family.</text>
</comment>
<dbReference type="EMBL" id="AF056316">
    <property type="protein sequence ID" value="AAD03501.1"/>
    <property type="molecule type" value="mRNA"/>
</dbReference>
<dbReference type="EMBL" id="AF098519">
    <property type="protein sequence ID" value="AAC97947.1"/>
    <property type="molecule type" value="mRNA"/>
</dbReference>
<dbReference type="SMR" id="Q9ZNS1"/>
<dbReference type="GO" id="GO:0030686">
    <property type="term" value="C:90S preribosome"/>
    <property type="evidence" value="ECO:0007669"/>
    <property type="project" value="TreeGrafter"/>
</dbReference>
<dbReference type="GO" id="GO:0022627">
    <property type="term" value="C:cytosolic small ribosomal subunit"/>
    <property type="evidence" value="ECO:0007669"/>
    <property type="project" value="TreeGrafter"/>
</dbReference>
<dbReference type="GO" id="GO:0032040">
    <property type="term" value="C:small-subunit processome"/>
    <property type="evidence" value="ECO:0007669"/>
    <property type="project" value="TreeGrafter"/>
</dbReference>
<dbReference type="GO" id="GO:0003735">
    <property type="term" value="F:structural constituent of ribosome"/>
    <property type="evidence" value="ECO:0007669"/>
    <property type="project" value="InterPro"/>
</dbReference>
<dbReference type="GO" id="GO:0042274">
    <property type="term" value="P:ribosomal small subunit biogenesis"/>
    <property type="evidence" value="ECO:0007669"/>
    <property type="project" value="TreeGrafter"/>
</dbReference>
<dbReference type="GO" id="GO:0006364">
    <property type="term" value="P:rRNA processing"/>
    <property type="evidence" value="ECO:0007669"/>
    <property type="project" value="TreeGrafter"/>
</dbReference>
<dbReference type="GO" id="GO:0006412">
    <property type="term" value="P:translation"/>
    <property type="evidence" value="ECO:0007669"/>
    <property type="project" value="InterPro"/>
</dbReference>
<dbReference type="InterPro" id="IPR000554">
    <property type="entry name" value="Ribosomal_eS7"/>
</dbReference>
<dbReference type="InterPro" id="IPR047861">
    <property type="entry name" value="Ribosomal_eS7_CS"/>
</dbReference>
<dbReference type="PANTHER" id="PTHR11278">
    <property type="entry name" value="40S RIBOSOMAL PROTEIN S7"/>
    <property type="match status" value="1"/>
</dbReference>
<dbReference type="PANTHER" id="PTHR11278:SF0">
    <property type="entry name" value="SMALL RIBOSOMAL SUBUNIT PROTEIN ES7"/>
    <property type="match status" value="1"/>
</dbReference>
<dbReference type="Pfam" id="PF01251">
    <property type="entry name" value="Ribosomal_S7e"/>
    <property type="match status" value="1"/>
</dbReference>
<dbReference type="PROSITE" id="PS00948">
    <property type="entry name" value="RIBOSOMAL_S7E"/>
    <property type="match status" value="1"/>
</dbReference>
<reference key="1">
    <citation type="online journal article" date="1998" name="Plant Gene Register">
        <title>A nuclear gene from Avicennia marina homologous to the 40S ribosomal protein S7 gene of animals and human.</title>
        <authorList>
            <person name="Parani M."/>
            <person name="Senthilkumar P."/>
            <person name="Lakshmi M."/>
            <person name="Parida A."/>
        </authorList>
        <locator>PGR98-203</locator>
    </citation>
    <scope>NUCLEOTIDE SEQUENCE [MRNA]</scope>
    <source>
        <tissue>Leaf</tissue>
    </source>
</reference>
<organism>
    <name type="scientific">Avicennia marina</name>
    <name type="common">Grey mangrove</name>
    <name type="synonym">Sceura marina</name>
    <dbReference type="NCBI Taxonomy" id="82927"/>
    <lineage>
        <taxon>Eukaryota</taxon>
        <taxon>Viridiplantae</taxon>
        <taxon>Streptophyta</taxon>
        <taxon>Embryophyta</taxon>
        <taxon>Tracheophyta</taxon>
        <taxon>Spermatophyta</taxon>
        <taxon>Magnoliopsida</taxon>
        <taxon>eudicotyledons</taxon>
        <taxon>Gunneridae</taxon>
        <taxon>Pentapetalae</taxon>
        <taxon>asterids</taxon>
        <taxon>lamiids</taxon>
        <taxon>Lamiales</taxon>
        <taxon>Acanthaceae</taxon>
        <taxon>Avicennioideae</taxon>
        <taxon>Avicennia</taxon>
    </lineage>
</organism>
<evidence type="ECO:0000305" key="1"/>
<name>RS7_AVIMR</name>